<organism>
    <name type="scientific">Staphylococcus aureus (strain USA300)</name>
    <dbReference type="NCBI Taxonomy" id="367830"/>
    <lineage>
        <taxon>Bacteria</taxon>
        <taxon>Bacillati</taxon>
        <taxon>Bacillota</taxon>
        <taxon>Bacilli</taxon>
        <taxon>Bacillales</taxon>
        <taxon>Staphylococcaceae</taxon>
        <taxon>Staphylococcus</taxon>
    </lineage>
</organism>
<feature type="chain" id="PRO_0000258263" description="Formimidoylglutamase">
    <location>
        <begin position="1"/>
        <end position="311"/>
    </location>
</feature>
<feature type="binding site" evidence="1">
    <location>
        <position position="130"/>
    </location>
    <ligand>
        <name>Mn(2+)</name>
        <dbReference type="ChEBI" id="CHEBI:29035"/>
        <label>1</label>
    </ligand>
</feature>
<feature type="binding site" evidence="1">
    <location>
        <position position="155"/>
    </location>
    <ligand>
        <name>Mn(2+)</name>
        <dbReference type="ChEBI" id="CHEBI:29035"/>
        <label>1</label>
    </ligand>
</feature>
<feature type="binding site" evidence="1">
    <location>
        <position position="155"/>
    </location>
    <ligand>
        <name>Mn(2+)</name>
        <dbReference type="ChEBI" id="CHEBI:29035"/>
        <label>2</label>
    </ligand>
</feature>
<feature type="binding site" evidence="1">
    <location>
        <position position="157"/>
    </location>
    <ligand>
        <name>Mn(2+)</name>
        <dbReference type="ChEBI" id="CHEBI:29035"/>
        <label>2</label>
    </ligand>
</feature>
<feature type="binding site" evidence="1">
    <location>
        <position position="159"/>
    </location>
    <ligand>
        <name>Mn(2+)</name>
        <dbReference type="ChEBI" id="CHEBI:29035"/>
        <label>1</label>
    </ligand>
</feature>
<feature type="binding site" evidence="1">
    <location>
        <position position="242"/>
    </location>
    <ligand>
        <name>Mn(2+)</name>
        <dbReference type="ChEBI" id="CHEBI:29035"/>
        <label>1</label>
    </ligand>
</feature>
<feature type="binding site" evidence="1">
    <location>
        <position position="242"/>
    </location>
    <ligand>
        <name>Mn(2+)</name>
        <dbReference type="ChEBI" id="CHEBI:29035"/>
        <label>2</label>
    </ligand>
</feature>
<feature type="binding site" evidence="1">
    <location>
        <position position="244"/>
    </location>
    <ligand>
        <name>Mn(2+)</name>
        <dbReference type="ChEBI" id="CHEBI:29035"/>
        <label>2</label>
    </ligand>
</feature>
<comment type="function">
    <text evidence="1">Catalyzes the conversion of N-formimidoyl-L-glutamate to L-glutamate and formamide.</text>
</comment>
<comment type="catalytic activity">
    <reaction evidence="1">
        <text>N-formimidoyl-L-glutamate + H2O = formamide + L-glutamate</text>
        <dbReference type="Rhea" id="RHEA:22492"/>
        <dbReference type="ChEBI" id="CHEBI:15377"/>
        <dbReference type="ChEBI" id="CHEBI:16397"/>
        <dbReference type="ChEBI" id="CHEBI:29985"/>
        <dbReference type="ChEBI" id="CHEBI:58928"/>
        <dbReference type="EC" id="3.5.3.8"/>
    </reaction>
</comment>
<comment type="cofactor">
    <cofactor evidence="1">
        <name>Mn(2+)</name>
        <dbReference type="ChEBI" id="CHEBI:29035"/>
    </cofactor>
    <text evidence="1">Binds 2 manganese ions per subunit.</text>
</comment>
<comment type="pathway">
    <text evidence="1">Amino-acid degradation; L-histidine degradation into L-glutamate; L-glutamate from N-formimidoyl-L-glutamate (hydrolase route): step 1/1.</text>
</comment>
<comment type="similarity">
    <text evidence="1">Belongs to the arginase family.</text>
</comment>
<keyword id="KW-0369">Histidine metabolism</keyword>
<keyword id="KW-0378">Hydrolase</keyword>
<keyword id="KW-0464">Manganese</keyword>
<keyword id="KW-0479">Metal-binding</keyword>
<reference key="1">
    <citation type="journal article" date="2006" name="Lancet">
        <title>Complete genome sequence of USA300, an epidemic clone of community-acquired meticillin-resistant Staphylococcus aureus.</title>
        <authorList>
            <person name="Diep B.A."/>
            <person name="Gill S.R."/>
            <person name="Chang R.F."/>
            <person name="Phan T.H."/>
            <person name="Chen J.H."/>
            <person name="Davidson M.G."/>
            <person name="Lin F."/>
            <person name="Lin J."/>
            <person name="Carleton H.A."/>
            <person name="Mongodin E.F."/>
            <person name="Sensabaugh G.F."/>
            <person name="Perdreau-Remington F."/>
        </authorList>
    </citation>
    <scope>NUCLEOTIDE SEQUENCE [LARGE SCALE GENOMIC DNA]</scope>
    <source>
        <strain>USA300</strain>
    </source>
</reference>
<name>HUTG_STAA3</name>
<protein>
    <recommendedName>
        <fullName evidence="1">Formimidoylglutamase</fullName>
        <ecNumber evidence="1">3.5.3.8</ecNumber>
    </recommendedName>
    <alternativeName>
        <fullName evidence="1">Formiminoglutamase</fullName>
    </alternativeName>
    <alternativeName>
        <fullName evidence="1">Formiminoglutamate hydrolase</fullName>
    </alternativeName>
</protein>
<sequence length="311" mass="34513">MYKQGEPNLWTGRLDSETDPKKFRHFQTVTFEDLSKLEKSSMPSGVGILGYAVDKGVALNKGRIGAKEGPDAIKQAFAGLPDLNQCETLVDYGNVYHDHEELIDTQKEFAMLAAKSIANHRQTFLLGGGHDIAYAQYLATRKVYPTQSIGVINIDAHFDTRAEQQSTSGTSFRQILEEDENTDYLVLGIAQGGNTQSLFDYAKEKKIDYVFADELLSHVSPTIKDMIERFVHEHDVIMFTICMDVIDSAFAPGVSAPAVLGLYPHTVLELAKRIIPSDKVSSVSIAEMNPTYDADNRTAKLVANLVHHFLK</sequence>
<evidence type="ECO:0000255" key="1">
    <source>
        <dbReference type="HAMAP-Rule" id="MF_00737"/>
    </source>
</evidence>
<gene>
    <name evidence="1" type="primary">hutG</name>
    <name type="ordered locus">SAUSA300_2281</name>
</gene>
<proteinExistence type="inferred from homology"/>
<dbReference type="EC" id="3.5.3.8" evidence="1"/>
<dbReference type="EMBL" id="CP000255">
    <property type="protein sequence ID" value="ABD21116.1"/>
    <property type="molecule type" value="Genomic_DNA"/>
</dbReference>
<dbReference type="RefSeq" id="WP_000277968.1">
    <property type="nucleotide sequence ID" value="NZ_CP027476.1"/>
</dbReference>
<dbReference type="SMR" id="Q2FEG2"/>
<dbReference type="KEGG" id="saa:SAUSA300_2281"/>
<dbReference type="HOGENOM" id="CLU_039478_2_0_9"/>
<dbReference type="OMA" id="WPFHYAC"/>
<dbReference type="UniPathway" id="UPA00379">
    <property type="reaction ID" value="UER00552"/>
</dbReference>
<dbReference type="Proteomes" id="UP000001939">
    <property type="component" value="Chromosome"/>
</dbReference>
<dbReference type="GO" id="GO:0008783">
    <property type="term" value="F:agmatinase activity"/>
    <property type="evidence" value="ECO:0007669"/>
    <property type="project" value="TreeGrafter"/>
</dbReference>
<dbReference type="GO" id="GO:0050415">
    <property type="term" value="F:formimidoylglutamase activity"/>
    <property type="evidence" value="ECO:0007669"/>
    <property type="project" value="UniProtKB-UniRule"/>
</dbReference>
<dbReference type="GO" id="GO:0030145">
    <property type="term" value="F:manganese ion binding"/>
    <property type="evidence" value="ECO:0007669"/>
    <property type="project" value="UniProtKB-UniRule"/>
</dbReference>
<dbReference type="GO" id="GO:0019556">
    <property type="term" value="P:L-histidine catabolic process to glutamate and formamide"/>
    <property type="evidence" value="ECO:0007669"/>
    <property type="project" value="UniProtKB-UniPathway"/>
</dbReference>
<dbReference type="GO" id="GO:0019557">
    <property type="term" value="P:L-histidine catabolic process to glutamate and formate"/>
    <property type="evidence" value="ECO:0007669"/>
    <property type="project" value="UniProtKB-UniPathway"/>
</dbReference>
<dbReference type="GO" id="GO:0033389">
    <property type="term" value="P:putrescine biosynthetic process from arginine, via agmatine"/>
    <property type="evidence" value="ECO:0007669"/>
    <property type="project" value="TreeGrafter"/>
</dbReference>
<dbReference type="CDD" id="cd09988">
    <property type="entry name" value="Formimidoylglutamase"/>
    <property type="match status" value="1"/>
</dbReference>
<dbReference type="FunFam" id="3.40.800.10:FF:000015">
    <property type="entry name" value="Formimidoylglutamase"/>
    <property type="match status" value="1"/>
</dbReference>
<dbReference type="Gene3D" id="3.40.800.10">
    <property type="entry name" value="Ureohydrolase domain"/>
    <property type="match status" value="1"/>
</dbReference>
<dbReference type="HAMAP" id="MF_00737">
    <property type="entry name" value="Formimidoylglutam"/>
    <property type="match status" value="1"/>
</dbReference>
<dbReference type="InterPro" id="IPR005923">
    <property type="entry name" value="HutG"/>
</dbReference>
<dbReference type="InterPro" id="IPR006035">
    <property type="entry name" value="Ureohydrolase"/>
</dbReference>
<dbReference type="InterPro" id="IPR023696">
    <property type="entry name" value="Ureohydrolase_dom_sf"/>
</dbReference>
<dbReference type="NCBIfam" id="TIGR01227">
    <property type="entry name" value="hutG"/>
    <property type="match status" value="1"/>
</dbReference>
<dbReference type="PANTHER" id="PTHR11358">
    <property type="entry name" value="ARGINASE/AGMATINASE"/>
    <property type="match status" value="1"/>
</dbReference>
<dbReference type="PANTHER" id="PTHR11358:SF35">
    <property type="entry name" value="FORMIMIDOYLGLUTAMASE"/>
    <property type="match status" value="1"/>
</dbReference>
<dbReference type="Pfam" id="PF00491">
    <property type="entry name" value="Arginase"/>
    <property type="match status" value="1"/>
</dbReference>
<dbReference type="PIRSF" id="PIRSF036979">
    <property type="entry name" value="Arginase"/>
    <property type="match status" value="1"/>
</dbReference>
<dbReference type="SUPFAM" id="SSF52768">
    <property type="entry name" value="Arginase/deacetylase"/>
    <property type="match status" value="1"/>
</dbReference>
<dbReference type="PROSITE" id="PS51409">
    <property type="entry name" value="ARGINASE_2"/>
    <property type="match status" value="1"/>
</dbReference>
<accession>Q2FEG2</accession>